<gene>
    <name evidence="1" type="primary">panC</name>
    <name type="ordered locus">Ppro_3535</name>
</gene>
<name>PANC_PELPD</name>
<dbReference type="EC" id="6.3.2.1" evidence="1"/>
<dbReference type="EMBL" id="CP000482">
    <property type="protein sequence ID" value="ABL01128.1"/>
    <property type="molecule type" value="Genomic_DNA"/>
</dbReference>
<dbReference type="RefSeq" id="WP_011737341.1">
    <property type="nucleotide sequence ID" value="NC_008609.1"/>
</dbReference>
<dbReference type="SMR" id="A1AUV7"/>
<dbReference type="STRING" id="338966.Ppro_3535"/>
<dbReference type="KEGG" id="ppd:Ppro_3535"/>
<dbReference type="eggNOG" id="COG0414">
    <property type="taxonomic scope" value="Bacteria"/>
</dbReference>
<dbReference type="HOGENOM" id="CLU_047148_0_0_7"/>
<dbReference type="OrthoDB" id="9773087at2"/>
<dbReference type="UniPathway" id="UPA00028">
    <property type="reaction ID" value="UER00005"/>
</dbReference>
<dbReference type="Proteomes" id="UP000006732">
    <property type="component" value="Chromosome"/>
</dbReference>
<dbReference type="GO" id="GO:0005829">
    <property type="term" value="C:cytosol"/>
    <property type="evidence" value="ECO:0007669"/>
    <property type="project" value="TreeGrafter"/>
</dbReference>
<dbReference type="GO" id="GO:0005524">
    <property type="term" value="F:ATP binding"/>
    <property type="evidence" value="ECO:0007669"/>
    <property type="project" value="UniProtKB-KW"/>
</dbReference>
<dbReference type="GO" id="GO:0004592">
    <property type="term" value="F:pantoate-beta-alanine ligase activity"/>
    <property type="evidence" value="ECO:0007669"/>
    <property type="project" value="UniProtKB-UniRule"/>
</dbReference>
<dbReference type="GO" id="GO:0015940">
    <property type="term" value="P:pantothenate biosynthetic process"/>
    <property type="evidence" value="ECO:0007669"/>
    <property type="project" value="UniProtKB-UniRule"/>
</dbReference>
<dbReference type="CDD" id="cd00560">
    <property type="entry name" value="PanC"/>
    <property type="match status" value="1"/>
</dbReference>
<dbReference type="FunFam" id="3.30.1300.10:FF:000001">
    <property type="entry name" value="Pantothenate synthetase"/>
    <property type="match status" value="1"/>
</dbReference>
<dbReference type="FunFam" id="3.40.50.620:FF:000013">
    <property type="entry name" value="Pantothenate synthetase"/>
    <property type="match status" value="1"/>
</dbReference>
<dbReference type="Gene3D" id="3.40.50.620">
    <property type="entry name" value="HUPs"/>
    <property type="match status" value="1"/>
</dbReference>
<dbReference type="Gene3D" id="3.30.1300.10">
    <property type="entry name" value="Pantoate-beta-alanine ligase, C-terminal domain"/>
    <property type="match status" value="1"/>
</dbReference>
<dbReference type="HAMAP" id="MF_00158">
    <property type="entry name" value="PanC"/>
    <property type="match status" value="1"/>
</dbReference>
<dbReference type="InterPro" id="IPR004821">
    <property type="entry name" value="Cyt_trans-like"/>
</dbReference>
<dbReference type="InterPro" id="IPR003721">
    <property type="entry name" value="Pantoate_ligase"/>
</dbReference>
<dbReference type="InterPro" id="IPR042176">
    <property type="entry name" value="Pantoate_ligase_C"/>
</dbReference>
<dbReference type="InterPro" id="IPR014729">
    <property type="entry name" value="Rossmann-like_a/b/a_fold"/>
</dbReference>
<dbReference type="NCBIfam" id="TIGR00125">
    <property type="entry name" value="cyt_tran_rel"/>
    <property type="match status" value="1"/>
</dbReference>
<dbReference type="NCBIfam" id="TIGR00018">
    <property type="entry name" value="panC"/>
    <property type="match status" value="1"/>
</dbReference>
<dbReference type="PANTHER" id="PTHR21299">
    <property type="entry name" value="CYTIDYLATE KINASE/PANTOATE-BETA-ALANINE LIGASE"/>
    <property type="match status" value="1"/>
</dbReference>
<dbReference type="PANTHER" id="PTHR21299:SF1">
    <property type="entry name" value="PANTOATE--BETA-ALANINE LIGASE"/>
    <property type="match status" value="1"/>
</dbReference>
<dbReference type="Pfam" id="PF02569">
    <property type="entry name" value="Pantoate_ligase"/>
    <property type="match status" value="1"/>
</dbReference>
<dbReference type="SUPFAM" id="SSF52374">
    <property type="entry name" value="Nucleotidylyl transferase"/>
    <property type="match status" value="1"/>
</dbReference>
<reference key="1">
    <citation type="submission" date="2006-10" db="EMBL/GenBank/DDBJ databases">
        <title>Complete sequence of chromosome of Pelobacter propionicus DSM 2379.</title>
        <authorList>
            <consortium name="US DOE Joint Genome Institute"/>
            <person name="Copeland A."/>
            <person name="Lucas S."/>
            <person name="Lapidus A."/>
            <person name="Barry K."/>
            <person name="Detter J.C."/>
            <person name="Glavina del Rio T."/>
            <person name="Hammon N."/>
            <person name="Israni S."/>
            <person name="Dalin E."/>
            <person name="Tice H."/>
            <person name="Pitluck S."/>
            <person name="Saunders E."/>
            <person name="Brettin T."/>
            <person name="Bruce D."/>
            <person name="Han C."/>
            <person name="Tapia R."/>
            <person name="Schmutz J."/>
            <person name="Larimer F."/>
            <person name="Land M."/>
            <person name="Hauser L."/>
            <person name="Kyrpides N."/>
            <person name="Kim E."/>
            <person name="Lovley D."/>
            <person name="Richardson P."/>
        </authorList>
    </citation>
    <scope>NUCLEOTIDE SEQUENCE [LARGE SCALE GENOMIC DNA]</scope>
    <source>
        <strain>DSM 2379 / NBRC 103807 / OttBd1</strain>
    </source>
</reference>
<keyword id="KW-0067">ATP-binding</keyword>
<keyword id="KW-0963">Cytoplasm</keyword>
<keyword id="KW-0436">Ligase</keyword>
<keyword id="KW-0547">Nucleotide-binding</keyword>
<keyword id="KW-0566">Pantothenate biosynthesis</keyword>
<keyword id="KW-1185">Reference proteome</keyword>
<sequence>MNIIAGINEMQTTARSLKQQGKSIAFVPTMGFLHEGHASLLREGRARGDILVLSLFVNPIQFGRNEDLDRYPRDLERDLGVAADCGVDIVFTPSATEMYPEEFQTSISVSRVSQPLCGASRPGHFDGVATVVTKLFNIVMPDIALFGRKDYQQLAVIRRMVADLSQGVTIVGMPIVRESDGLAMSSRNAYLAPPERQSALALSRSIAAVRNAYAAGERSVEALSRMARDIISQEALLKIDYLEFRNEATLQPISEAAGDTLFALAVNVGTTRLIDNTVLGVCRA</sequence>
<comment type="function">
    <text evidence="1">Catalyzes the condensation of pantoate with beta-alanine in an ATP-dependent reaction via a pantoyl-adenylate intermediate.</text>
</comment>
<comment type="catalytic activity">
    <reaction evidence="1">
        <text>(R)-pantoate + beta-alanine + ATP = (R)-pantothenate + AMP + diphosphate + H(+)</text>
        <dbReference type="Rhea" id="RHEA:10912"/>
        <dbReference type="ChEBI" id="CHEBI:15378"/>
        <dbReference type="ChEBI" id="CHEBI:15980"/>
        <dbReference type="ChEBI" id="CHEBI:29032"/>
        <dbReference type="ChEBI" id="CHEBI:30616"/>
        <dbReference type="ChEBI" id="CHEBI:33019"/>
        <dbReference type="ChEBI" id="CHEBI:57966"/>
        <dbReference type="ChEBI" id="CHEBI:456215"/>
        <dbReference type="EC" id="6.3.2.1"/>
    </reaction>
</comment>
<comment type="pathway">
    <text evidence="1">Cofactor biosynthesis; (R)-pantothenate biosynthesis; (R)-pantothenate from (R)-pantoate and beta-alanine: step 1/1.</text>
</comment>
<comment type="subunit">
    <text evidence="1">Homodimer.</text>
</comment>
<comment type="subcellular location">
    <subcellularLocation>
        <location evidence="1">Cytoplasm</location>
    </subcellularLocation>
</comment>
<comment type="miscellaneous">
    <text evidence="1">The reaction proceeds by a bi uni uni bi ping pong mechanism.</text>
</comment>
<comment type="similarity">
    <text evidence="1">Belongs to the pantothenate synthetase family.</text>
</comment>
<organism>
    <name type="scientific">Pelobacter propionicus (strain DSM 2379 / NBRC 103807 / OttBd1)</name>
    <dbReference type="NCBI Taxonomy" id="338966"/>
    <lineage>
        <taxon>Bacteria</taxon>
        <taxon>Pseudomonadati</taxon>
        <taxon>Thermodesulfobacteriota</taxon>
        <taxon>Desulfuromonadia</taxon>
        <taxon>Desulfuromonadales</taxon>
        <taxon>Desulfuromonadaceae</taxon>
        <taxon>Pelobacter</taxon>
    </lineage>
</organism>
<proteinExistence type="inferred from homology"/>
<accession>A1AUV7</accession>
<feature type="chain" id="PRO_0000305507" description="Pantothenate synthetase">
    <location>
        <begin position="1"/>
        <end position="284"/>
    </location>
</feature>
<feature type="active site" description="Proton donor" evidence="1">
    <location>
        <position position="37"/>
    </location>
</feature>
<feature type="binding site" evidence="1">
    <location>
        <begin position="30"/>
        <end position="37"/>
    </location>
    <ligand>
        <name>ATP</name>
        <dbReference type="ChEBI" id="CHEBI:30616"/>
    </ligand>
</feature>
<feature type="binding site" evidence="1">
    <location>
        <position position="61"/>
    </location>
    <ligand>
        <name>(R)-pantoate</name>
        <dbReference type="ChEBI" id="CHEBI:15980"/>
    </ligand>
</feature>
<feature type="binding site" evidence="1">
    <location>
        <position position="61"/>
    </location>
    <ligand>
        <name>beta-alanine</name>
        <dbReference type="ChEBI" id="CHEBI:57966"/>
    </ligand>
</feature>
<feature type="binding site" evidence="1">
    <location>
        <begin position="147"/>
        <end position="150"/>
    </location>
    <ligand>
        <name>ATP</name>
        <dbReference type="ChEBI" id="CHEBI:30616"/>
    </ligand>
</feature>
<feature type="binding site" evidence="1">
    <location>
        <position position="153"/>
    </location>
    <ligand>
        <name>(R)-pantoate</name>
        <dbReference type="ChEBI" id="CHEBI:15980"/>
    </ligand>
</feature>
<feature type="binding site" evidence="1">
    <location>
        <position position="176"/>
    </location>
    <ligand>
        <name>ATP</name>
        <dbReference type="ChEBI" id="CHEBI:30616"/>
    </ligand>
</feature>
<feature type="binding site" evidence="1">
    <location>
        <begin position="184"/>
        <end position="187"/>
    </location>
    <ligand>
        <name>ATP</name>
        <dbReference type="ChEBI" id="CHEBI:30616"/>
    </ligand>
</feature>
<evidence type="ECO:0000255" key="1">
    <source>
        <dbReference type="HAMAP-Rule" id="MF_00158"/>
    </source>
</evidence>
<protein>
    <recommendedName>
        <fullName evidence="1">Pantothenate synthetase</fullName>
        <shortName evidence="1">PS</shortName>
        <ecNumber evidence="1">6.3.2.1</ecNumber>
    </recommendedName>
    <alternativeName>
        <fullName evidence="1">Pantoate--beta-alanine ligase</fullName>
    </alternativeName>
    <alternativeName>
        <fullName evidence="1">Pantoate-activating enzyme</fullName>
    </alternativeName>
</protein>